<reference key="1">
    <citation type="submission" date="2007-08" db="EMBL/GenBank/DDBJ databases">
        <authorList>
            <consortium name="The Vibrio harveyi Genome Sequencing Project"/>
            <person name="Bassler B."/>
            <person name="Clifton S.W."/>
            <person name="Fulton L."/>
            <person name="Delehaunty K."/>
            <person name="Fronick C."/>
            <person name="Harrison M."/>
            <person name="Markivic C."/>
            <person name="Fulton R."/>
            <person name="Tin-Wollam A.-M."/>
            <person name="Shah N."/>
            <person name="Pepin K."/>
            <person name="Nash W."/>
            <person name="Thiruvilangam P."/>
            <person name="Bhonagiri V."/>
            <person name="Waters C."/>
            <person name="Tu K.C."/>
            <person name="Irgon J."/>
            <person name="Wilson R.K."/>
        </authorList>
    </citation>
    <scope>NUCLEOTIDE SEQUENCE [LARGE SCALE GENOMIC DNA]</scope>
    <source>
        <strain>ATCC BAA-1116 / BB120</strain>
    </source>
</reference>
<organism>
    <name type="scientific">Vibrio campbellii (strain ATCC BAA-1116)</name>
    <dbReference type="NCBI Taxonomy" id="2902295"/>
    <lineage>
        <taxon>Bacteria</taxon>
        <taxon>Pseudomonadati</taxon>
        <taxon>Pseudomonadota</taxon>
        <taxon>Gammaproteobacteria</taxon>
        <taxon>Vibrionales</taxon>
        <taxon>Vibrionaceae</taxon>
        <taxon>Vibrio</taxon>
    </lineage>
</organism>
<evidence type="ECO:0000255" key="1">
    <source>
        <dbReference type="HAMAP-Rule" id="MF_00368"/>
    </source>
</evidence>
<evidence type="ECO:0000305" key="2"/>
<sequence length="122" mass="12164">MSITNEQILDAVAEMSVMQVVELIEAMEEKFGVTAAAAVVAGGAAGGEAAAEQTEFDVILESAGGNKVAVIKAVRGATGLGLKEAKALVDGAPAPLKEGVDKAEADALKAQLEEAGATVAVK</sequence>
<dbReference type="EMBL" id="CP000789">
    <property type="protein sequence ID" value="ABU69266.1"/>
    <property type="molecule type" value="Genomic_DNA"/>
</dbReference>
<dbReference type="RefSeq" id="WP_005451128.1">
    <property type="nucleotide sequence ID" value="NC_022269.1"/>
</dbReference>
<dbReference type="SMR" id="A7MXF2"/>
<dbReference type="GeneID" id="67375887"/>
<dbReference type="KEGG" id="vha:VIBHAR_00226"/>
<dbReference type="PATRIC" id="fig|338187.25.peg.2325"/>
<dbReference type="Proteomes" id="UP000008152">
    <property type="component" value="Chromosome I"/>
</dbReference>
<dbReference type="GO" id="GO:0022625">
    <property type="term" value="C:cytosolic large ribosomal subunit"/>
    <property type="evidence" value="ECO:0007669"/>
    <property type="project" value="TreeGrafter"/>
</dbReference>
<dbReference type="GO" id="GO:0003729">
    <property type="term" value="F:mRNA binding"/>
    <property type="evidence" value="ECO:0007669"/>
    <property type="project" value="TreeGrafter"/>
</dbReference>
<dbReference type="GO" id="GO:0003735">
    <property type="term" value="F:structural constituent of ribosome"/>
    <property type="evidence" value="ECO:0007669"/>
    <property type="project" value="InterPro"/>
</dbReference>
<dbReference type="GO" id="GO:0006412">
    <property type="term" value="P:translation"/>
    <property type="evidence" value="ECO:0007669"/>
    <property type="project" value="UniProtKB-UniRule"/>
</dbReference>
<dbReference type="CDD" id="cd00387">
    <property type="entry name" value="Ribosomal_L7_L12"/>
    <property type="match status" value="1"/>
</dbReference>
<dbReference type="FunFam" id="1.20.5.710:FF:000003">
    <property type="entry name" value="50S ribosomal protein L7/L12"/>
    <property type="match status" value="1"/>
</dbReference>
<dbReference type="FunFam" id="3.30.1390.10:FF:000001">
    <property type="entry name" value="50S ribosomal protein L7/L12"/>
    <property type="match status" value="1"/>
</dbReference>
<dbReference type="Gene3D" id="3.30.1390.10">
    <property type="match status" value="1"/>
</dbReference>
<dbReference type="Gene3D" id="1.20.5.710">
    <property type="entry name" value="Single helix bin"/>
    <property type="match status" value="1"/>
</dbReference>
<dbReference type="HAMAP" id="MF_00368">
    <property type="entry name" value="Ribosomal_bL12"/>
    <property type="match status" value="1"/>
</dbReference>
<dbReference type="InterPro" id="IPR000206">
    <property type="entry name" value="Ribosomal_bL12"/>
</dbReference>
<dbReference type="InterPro" id="IPR013823">
    <property type="entry name" value="Ribosomal_bL12_C"/>
</dbReference>
<dbReference type="InterPro" id="IPR014719">
    <property type="entry name" value="Ribosomal_bL12_C/ClpS-like"/>
</dbReference>
<dbReference type="InterPro" id="IPR008932">
    <property type="entry name" value="Ribosomal_bL12_oligo"/>
</dbReference>
<dbReference type="InterPro" id="IPR036235">
    <property type="entry name" value="Ribosomal_bL12_oligo_N_sf"/>
</dbReference>
<dbReference type="NCBIfam" id="TIGR00855">
    <property type="entry name" value="L12"/>
    <property type="match status" value="1"/>
</dbReference>
<dbReference type="PANTHER" id="PTHR45987">
    <property type="entry name" value="39S RIBOSOMAL PROTEIN L12"/>
    <property type="match status" value="1"/>
</dbReference>
<dbReference type="PANTHER" id="PTHR45987:SF4">
    <property type="entry name" value="LARGE RIBOSOMAL SUBUNIT PROTEIN BL12M"/>
    <property type="match status" value="1"/>
</dbReference>
<dbReference type="Pfam" id="PF00542">
    <property type="entry name" value="Ribosomal_L12"/>
    <property type="match status" value="1"/>
</dbReference>
<dbReference type="Pfam" id="PF16320">
    <property type="entry name" value="Ribosomal_L12_N"/>
    <property type="match status" value="1"/>
</dbReference>
<dbReference type="SUPFAM" id="SSF54736">
    <property type="entry name" value="ClpS-like"/>
    <property type="match status" value="1"/>
</dbReference>
<dbReference type="SUPFAM" id="SSF48300">
    <property type="entry name" value="Ribosomal protein L7/12, oligomerisation (N-terminal) domain"/>
    <property type="match status" value="1"/>
</dbReference>
<keyword id="KW-0687">Ribonucleoprotein</keyword>
<keyword id="KW-0689">Ribosomal protein</keyword>
<accession>A7MXF2</accession>
<name>RL7_VIBC1</name>
<protein>
    <recommendedName>
        <fullName evidence="1">Large ribosomal subunit protein bL12</fullName>
    </recommendedName>
    <alternativeName>
        <fullName evidence="2">50S ribosomal protein L7/L12</fullName>
    </alternativeName>
</protein>
<gene>
    <name evidence="1" type="primary">rplL</name>
    <name type="ordered locus">VIBHAR_00226</name>
</gene>
<comment type="function">
    <text evidence="1">Forms part of the ribosomal stalk which helps the ribosome interact with GTP-bound translation factors. Is thus essential for accurate translation.</text>
</comment>
<comment type="subunit">
    <text evidence="1">Homodimer. Part of the ribosomal stalk of the 50S ribosomal subunit. Forms a multimeric L10(L12)X complex, where L10 forms an elongated spine to which 2 to 4 L12 dimers bind in a sequential fashion. Binds GTP-bound translation factors.</text>
</comment>
<comment type="similarity">
    <text evidence="1">Belongs to the bacterial ribosomal protein bL12 family.</text>
</comment>
<feature type="chain" id="PRO_1000007110" description="Large ribosomal subunit protein bL12">
    <location>
        <begin position="1"/>
        <end position="122"/>
    </location>
</feature>
<proteinExistence type="inferred from homology"/>